<feature type="chain" id="PRO_1000122547" description="Aspartyl/glutamyl-tRNA(Asn/Gln) amidotransferase subunit C">
    <location>
        <begin position="1"/>
        <end position="95"/>
    </location>
</feature>
<name>GATC_ALLAM</name>
<accession>B9JVJ0</accession>
<evidence type="ECO:0000255" key="1">
    <source>
        <dbReference type="HAMAP-Rule" id="MF_00122"/>
    </source>
</evidence>
<dbReference type="EC" id="6.3.5.-" evidence="1"/>
<dbReference type="EMBL" id="CP000633">
    <property type="protein sequence ID" value="ACM36270.1"/>
    <property type="molecule type" value="Genomic_DNA"/>
</dbReference>
<dbReference type="RefSeq" id="WP_015915693.1">
    <property type="nucleotide sequence ID" value="NC_011989.1"/>
</dbReference>
<dbReference type="SMR" id="B9JVJ0"/>
<dbReference type="STRING" id="311402.Avi_1770"/>
<dbReference type="KEGG" id="avi:Avi_1770"/>
<dbReference type="eggNOG" id="COG0721">
    <property type="taxonomic scope" value="Bacteria"/>
</dbReference>
<dbReference type="HOGENOM" id="CLU_105899_2_0_5"/>
<dbReference type="Proteomes" id="UP000001596">
    <property type="component" value="Chromosome 1"/>
</dbReference>
<dbReference type="GO" id="GO:0050566">
    <property type="term" value="F:asparaginyl-tRNA synthase (glutamine-hydrolyzing) activity"/>
    <property type="evidence" value="ECO:0007669"/>
    <property type="project" value="RHEA"/>
</dbReference>
<dbReference type="GO" id="GO:0005524">
    <property type="term" value="F:ATP binding"/>
    <property type="evidence" value="ECO:0007669"/>
    <property type="project" value="UniProtKB-KW"/>
</dbReference>
<dbReference type="GO" id="GO:0050567">
    <property type="term" value="F:glutaminyl-tRNA synthase (glutamine-hydrolyzing) activity"/>
    <property type="evidence" value="ECO:0007669"/>
    <property type="project" value="UniProtKB-UniRule"/>
</dbReference>
<dbReference type="GO" id="GO:0070681">
    <property type="term" value="P:glutaminyl-tRNAGln biosynthesis via transamidation"/>
    <property type="evidence" value="ECO:0007669"/>
    <property type="project" value="TreeGrafter"/>
</dbReference>
<dbReference type="GO" id="GO:0006450">
    <property type="term" value="P:regulation of translational fidelity"/>
    <property type="evidence" value="ECO:0007669"/>
    <property type="project" value="InterPro"/>
</dbReference>
<dbReference type="GO" id="GO:0006412">
    <property type="term" value="P:translation"/>
    <property type="evidence" value="ECO:0007669"/>
    <property type="project" value="UniProtKB-UniRule"/>
</dbReference>
<dbReference type="Gene3D" id="1.10.20.60">
    <property type="entry name" value="Glu-tRNAGln amidotransferase C subunit, N-terminal domain"/>
    <property type="match status" value="1"/>
</dbReference>
<dbReference type="HAMAP" id="MF_00122">
    <property type="entry name" value="GatC"/>
    <property type="match status" value="1"/>
</dbReference>
<dbReference type="InterPro" id="IPR036113">
    <property type="entry name" value="Asp/Glu-ADT_sf_sub_c"/>
</dbReference>
<dbReference type="InterPro" id="IPR003837">
    <property type="entry name" value="GatC"/>
</dbReference>
<dbReference type="NCBIfam" id="TIGR00135">
    <property type="entry name" value="gatC"/>
    <property type="match status" value="1"/>
</dbReference>
<dbReference type="PANTHER" id="PTHR15004">
    <property type="entry name" value="GLUTAMYL-TRNA(GLN) AMIDOTRANSFERASE SUBUNIT C, MITOCHONDRIAL"/>
    <property type="match status" value="1"/>
</dbReference>
<dbReference type="PANTHER" id="PTHR15004:SF0">
    <property type="entry name" value="GLUTAMYL-TRNA(GLN) AMIDOTRANSFERASE SUBUNIT C, MITOCHONDRIAL"/>
    <property type="match status" value="1"/>
</dbReference>
<dbReference type="Pfam" id="PF02686">
    <property type="entry name" value="GatC"/>
    <property type="match status" value="1"/>
</dbReference>
<dbReference type="SUPFAM" id="SSF141000">
    <property type="entry name" value="Glu-tRNAGln amidotransferase C subunit"/>
    <property type="match status" value="1"/>
</dbReference>
<proteinExistence type="inferred from homology"/>
<keyword id="KW-0067">ATP-binding</keyword>
<keyword id="KW-0436">Ligase</keyword>
<keyword id="KW-0547">Nucleotide-binding</keyword>
<keyword id="KW-0648">Protein biosynthesis</keyword>
<keyword id="KW-1185">Reference proteome</keyword>
<protein>
    <recommendedName>
        <fullName evidence="1">Aspartyl/glutamyl-tRNA(Asn/Gln) amidotransferase subunit C</fullName>
        <shortName evidence="1">Asp/Glu-ADT subunit C</shortName>
        <ecNumber evidence="1">6.3.5.-</ecNumber>
    </recommendedName>
</protein>
<organism>
    <name type="scientific">Allorhizobium ampelinum (strain ATCC BAA-846 / DSM 112012 / S4)</name>
    <name type="common">Agrobacterium vitis (strain S4)</name>
    <dbReference type="NCBI Taxonomy" id="311402"/>
    <lineage>
        <taxon>Bacteria</taxon>
        <taxon>Pseudomonadati</taxon>
        <taxon>Pseudomonadota</taxon>
        <taxon>Alphaproteobacteria</taxon>
        <taxon>Hyphomicrobiales</taxon>
        <taxon>Rhizobiaceae</taxon>
        <taxon>Rhizobium/Agrobacterium group</taxon>
        <taxon>Allorhizobium</taxon>
        <taxon>Allorhizobium ampelinum</taxon>
    </lineage>
</organism>
<comment type="function">
    <text evidence="1">Allows the formation of correctly charged Asn-tRNA(Asn) or Gln-tRNA(Gln) through the transamidation of misacylated Asp-tRNA(Asn) or Glu-tRNA(Gln) in organisms which lack either or both of asparaginyl-tRNA or glutaminyl-tRNA synthetases. The reaction takes place in the presence of glutamine and ATP through an activated phospho-Asp-tRNA(Asn) or phospho-Glu-tRNA(Gln).</text>
</comment>
<comment type="catalytic activity">
    <reaction evidence="1">
        <text>L-glutamyl-tRNA(Gln) + L-glutamine + ATP + H2O = L-glutaminyl-tRNA(Gln) + L-glutamate + ADP + phosphate + H(+)</text>
        <dbReference type="Rhea" id="RHEA:17521"/>
        <dbReference type="Rhea" id="RHEA-COMP:9681"/>
        <dbReference type="Rhea" id="RHEA-COMP:9684"/>
        <dbReference type="ChEBI" id="CHEBI:15377"/>
        <dbReference type="ChEBI" id="CHEBI:15378"/>
        <dbReference type="ChEBI" id="CHEBI:29985"/>
        <dbReference type="ChEBI" id="CHEBI:30616"/>
        <dbReference type="ChEBI" id="CHEBI:43474"/>
        <dbReference type="ChEBI" id="CHEBI:58359"/>
        <dbReference type="ChEBI" id="CHEBI:78520"/>
        <dbReference type="ChEBI" id="CHEBI:78521"/>
        <dbReference type="ChEBI" id="CHEBI:456216"/>
    </reaction>
</comment>
<comment type="catalytic activity">
    <reaction evidence="1">
        <text>L-aspartyl-tRNA(Asn) + L-glutamine + ATP + H2O = L-asparaginyl-tRNA(Asn) + L-glutamate + ADP + phosphate + 2 H(+)</text>
        <dbReference type="Rhea" id="RHEA:14513"/>
        <dbReference type="Rhea" id="RHEA-COMP:9674"/>
        <dbReference type="Rhea" id="RHEA-COMP:9677"/>
        <dbReference type="ChEBI" id="CHEBI:15377"/>
        <dbReference type="ChEBI" id="CHEBI:15378"/>
        <dbReference type="ChEBI" id="CHEBI:29985"/>
        <dbReference type="ChEBI" id="CHEBI:30616"/>
        <dbReference type="ChEBI" id="CHEBI:43474"/>
        <dbReference type="ChEBI" id="CHEBI:58359"/>
        <dbReference type="ChEBI" id="CHEBI:78515"/>
        <dbReference type="ChEBI" id="CHEBI:78516"/>
        <dbReference type="ChEBI" id="CHEBI:456216"/>
    </reaction>
</comment>
<comment type="subunit">
    <text evidence="1">Heterotrimer of A, B and C subunits.</text>
</comment>
<comment type="similarity">
    <text evidence="1">Belongs to the GatC family.</text>
</comment>
<sequence>MSVDLATVKRVAKLARIALPEDEAERVMGELNGILGFVEQLSEVNVDGVEPMTSVMPMAMRKRKDAVTDGGKADDIVANAPETDRHFFLVPKVVE</sequence>
<reference key="1">
    <citation type="journal article" date="2009" name="J. Bacteriol.">
        <title>Genome sequences of three Agrobacterium biovars help elucidate the evolution of multichromosome genomes in bacteria.</title>
        <authorList>
            <person name="Slater S.C."/>
            <person name="Goldman B.S."/>
            <person name="Goodner B."/>
            <person name="Setubal J.C."/>
            <person name="Farrand S.K."/>
            <person name="Nester E.W."/>
            <person name="Burr T.J."/>
            <person name="Banta L."/>
            <person name="Dickerman A.W."/>
            <person name="Paulsen I."/>
            <person name="Otten L."/>
            <person name="Suen G."/>
            <person name="Welch R."/>
            <person name="Almeida N.F."/>
            <person name="Arnold F."/>
            <person name="Burton O.T."/>
            <person name="Du Z."/>
            <person name="Ewing A."/>
            <person name="Godsy E."/>
            <person name="Heisel S."/>
            <person name="Houmiel K.L."/>
            <person name="Jhaveri J."/>
            <person name="Lu J."/>
            <person name="Miller N.M."/>
            <person name="Norton S."/>
            <person name="Chen Q."/>
            <person name="Phoolcharoen W."/>
            <person name="Ohlin V."/>
            <person name="Ondrusek D."/>
            <person name="Pride N."/>
            <person name="Stricklin S.L."/>
            <person name="Sun J."/>
            <person name="Wheeler C."/>
            <person name="Wilson L."/>
            <person name="Zhu H."/>
            <person name="Wood D.W."/>
        </authorList>
    </citation>
    <scope>NUCLEOTIDE SEQUENCE [LARGE SCALE GENOMIC DNA]</scope>
    <source>
        <strain>ATCC BAA-846 / DSM 112012 / S4</strain>
    </source>
</reference>
<gene>
    <name evidence="1" type="primary">gatC</name>
    <name type="ordered locus">Avi_1770</name>
</gene>